<accession>Q829F2</accession>
<proteinExistence type="inferred from homology"/>
<gene>
    <name evidence="1" type="primary">tyrS</name>
    <name type="ordered locus">SAV_6459</name>
</gene>
<protein>
    <recommendedName>
        <fullName evidence="1">Tyrosine--tRNA ligase</fullName>
        <ecNumber evidence="1">6.1.1.1</ecNumber>
    </recommendedName>
    <alternativeName>
        <fullName evidence="1">Tyrosyl-tRNA synthetase</fullName>
        <shortName evidence="1">TyrRS</shortName>
    </alternativeName>
</protein>
<feature type="chain" id="PRO_0000234799" description="Tyrosine--tRNA ligase">
    <location>
        <begin position="1"/>
        <end position="422"/>
    </location>
</feature>
<feature type="domain" description="S4 RNA-binding" evidence="1">
    <location>
        <begin position="353"/>
        <end position="419"/>
    </location>
</feature>
<feature type="short sequence motif" description="'HIGH' region">
    <location>
        <begin position="40"/>
        <end position="49"/>
    </location>
</feature>
<feature type="short sequence motif" description="'KMSKS' region">
    <location>
        <begin position="231"/>
        <end position="235"/>
    </location>
</feature>
<feature type="binding site" evidence="1">
    <location>
        <position position="35"/>
    </location>
    <ligand>
        <name>L-tyrosine</name>
        <dbReference type="ChEBI" id="CHEBI:58315"/>
    </ligand>
</feature>
<feature type="binding site" evidence="1">
    <location>
        <position position="170"/>
    </location>
    <ligand>
        <name>L-tyrosine</name>
        <dbReference type="ChEBI" id="CHEBI:58315"/>
    </ligand>
</feature>
<feature type="binding site" evidence="1">
    <location>
        <position position="174"/>
    </location>
    <ligand>
        <name>L-tyrosine</name>
        <dbReference type="ChEBI" id="CHEBI:58315"/>
    </ligand>
</feature>
<feature type="binding site" evidence="1">
    <location>
        <position position="234"/>
    </location>
    <ligand>
        <name>ATP</name>
        <dbReference type="ChEBI" id="CHEBI:30616"/>
    </ligand>
</feature>
<keyword id="KW-0030">Aminoacyl-tRNA synthetase</keyword>
<keyword id="KW-0067">ATP-binding</keyword>
<keyword id="KW-0963">Cytoplasm</keyword>
<keyword id="KW-0436">Ligase</keyword>
<keyword id="KW-0547">Nucleotide-binding</keyword>
<keyword id="KW-0648">Protein biosynthesis</keyword>
<keyword id="KW-1185">Reference proteome</keyword>
<keyword id="KW-0694">RNA-binding</keyword>
<sequence length="422" mass="46240">MTDIVDELKWRGLVALSTDEDALRKAFADGPVTFYCGFDPTAPSLHLGNLVQILTMRRIQQAGNRPLGLVGGATGLIGDPKPNSERTLNSREVVAEWVERLRAQIAPLLDFEGPNAAIMVNNLDWTQGLSAIEFLRDVGKYFRVNKMIAKEAVSRRLNSDAGISYTEFSYQILQGMDFLELYRRYGCTLQTGGSDQWGNLTSGTDLIHRAEPDAVVHALGTPLITKADGTKFGKTESGTIWLDPEMTTPYAFYQFWLNADDRDVSKFLRIFSFKSHEEIEELEKQTEERPQARAAQRALAEELTTLVHGADQTAAVIAASKALFGQGELTELDEATLAAALSELPHVKVAEPAPVVDLFAEVALVASKSAARRTIKEGGAYVNNVKVAAEDAVPAKEDLLHGRWLVLRRGKKNLAAVEVTGG</sequence>
<evidence type="ECO:0000255" key="1">
    <source>
        <dbReference type="HAMAP-Rule" id="MF_02006"/>
    </source>
</evidence>
<dbReference type="EC" id="6.1.1.1" evidence="1"/>
<dbReference type="EMBL" id="BA000030">
    <property type="protein sequence ID" value="BAC74170.1"/>
    <property type="molecule type" value="Genomic_DNA"/>
</dbReference>
<dbReference type="RefSeq" id="WP_010987859.1">
    <property type="nucleotide sequence ID" value="NZ_JZJK01000089.1"/>
</dbReference>
<dbReference type="SMR" id="Q829F2"/>
<dbReference type="GeneID" id="41543533"/>
<dbReference type="KEGG" id="sma:SAVERM_6459"/>
<dbReference type="eggNOG" id="COG0162">
    <property type="taxonomic scope" value="Bacteria"/>
</dbReference>
<dbReference type="HOGENOM" id="CLU_024003_0_2_11"/>
<dbReference type="OrthoDB" id="9804243at2"/>
<dbReference type="Proteomes" id="UP000000428">
    <property type="component" value="Chromosome"/>
</dbReference>
<dbReference type="GO" id="GO:0005829">
    <property type="term" value="C:cytosol"/>
    <property type="evidence" value="ECO:0007669"/>
    <property type="project" value="TreeGrafter"/>
</dbReference>
<dbReference type="GO" id="GO:0005524">
    <property type="term" value="F:ATP binding"/>
    <property type="evidence" value="ECO:0007669"/>
    <property type="project" value="UniProtKB-UniRule"/>
</dbReference>
<dbReference type="GO" id="GO:0003723">
    <property type="term" value="F:RNA binding"/>
    <property type="evidence" value="ECO:0007669"/>
    <property type="project" value="UniProtKB-KW"/>
</dbReference>
<dbReference type="GO" id="GO:0004831">
    <property type="term" value="F:tyrosine-tRNA ligase activity"/>
    <property type="evidence" value="ECO:0007669"/>
    <property type="project" value="UniProtKB-UniRule"/>
</dbReference>
<dbReference type="GO" id="GO:0006437">
    <property type="term" value="P:tyrosyl-tRNA aminoacylation"/>
    <property type="evidence" value="ECO:0007669"/>
    <property type="project" value="UniProtKB-UniRule"/>
</dbReference>
<dbReference type="CDD" id="cd00805">
    <property type="entry name" value="TyrRS_core"/>
    <property type="match status" value="1"/>
</dbReference>
<dbReference type="FunFam" id="1.10.240.10:FF:000001">
    <property type="entry name" value="Tyrosine--tRNA ligase"/>
    <property type="match status" value="1"/>
</dbReference>
<dbReference type="FunFam" id="3.10.290.10:FF:000014">
    <property type="entry name" value="Tyrosine--tRNA ligase"/>
    <property type="match status" value="1"/>
</dbReference>
<dbReference type="FunFam" id="3.40.50.620:FF:000008">
    <property type="entry name" value="Tyrosine--tRNA ligase"/>
    <property type="match status" value="1"/>
</dbReference>
<dbReference type="Gene3D" id="3.40.50.620">
    <property type="entry name" value="HUPs"/>
    <property type="match status" value="1"/>
</dbReference>
<dbReference type="Gene3D" id="3.10.290.10">
    <property type="entry name" value="RNA-binding S4 domain"/>
    <property type="match status" value="1"/>
</dbReference>
<dbReference type="Gene3D" id="1.10.240.10">
    <property type="entry name" value="Tyrosyl-Transfer RNA Synthetase"/>
    <property type="match status" value="1"/>
</dbReference>
<dbReference type="HAMAP" id="MF_02006">
    <property type="entry name" value="Tyr_tRNA_synth_type1"/>
    <property type="match status" value="1"/>
</dbReference>
<dbReference type="InterPro" id="IPR001412">
    <property type="entry name" value="aa-tRNA-synth_I_CS"/>
</dbReference>
<dbReference type="InterPro" id="IPR002305">
    <property type="entry name" value="aa-tRNA-synth_Ic"/>
</dbReference>
<dbReference type="InterPro" id="IPR014729">
    <property type="entry name" value="Rossmann-like_a/b/a_fold"/>
</dbReference>
<dbReference type="InterPro" id="IPR036986">
    <property type="entry name" value="S4_RNA-bd_sf"/>
</dbReference>
<dbReference type="InterPro" id="IPR054608">
    <property type="entry name" value="SYY-like_C"/>
</dbReference>
<dbReference type="InterPro" id="IPR002307">
    <property type="entry name" value="Tyr-tRNA-ligase"/>
</dbReference>
<dbReference type="InterPro" id="IPR024088">
    <property type="entry name" value="Tyr-tRNA-ligase_bac-type"/>
</dbReference>
<dbReference type="InterPro" id="IPR024107">
    <property type="entry name" value="Tyr-tRNA-ligase_bac_1"/>
</dbReference>
<dbReference type="NCBIfam" id="TIGR00234">
    <property type="entry name" value="tyrS"/>
    <property type="match status" value="1"/>
</dbReference>
<dbReference type="PANTHER" id="PTHR11766:SF0">
    <property type="entry name" value="TYROSINE--TRNA LIGASE, MITOCHONDRIAL"/>
    <property type="match status" value="1"/>
</dbReference>
<dbReference type="PANTHER" id="PTHR11766">
    <property type="entry name" value="TYROSYL-TRNA SYNTHETASE"/>
    <property type="match status" value="1"/>
</dbReference>
<dbReference type="Pfam" id="PF22421">
    <property type="entry name" value="SYY_C-terminal"/>
    <property type="match status" value="1"/>
</dbReference>
<dbReference type="Pfam" id="PF00579">
    <property type="entry name" value="tRNA-synt_1b"/>
    <property type="match status" value="1"/>
</dbReference>
<dbReference type="PRINTS" id="PR01040">
    <property type="entry name" value="TRNASYNTHTYR"/>
</dbReference>
<dbReference type="SUPFAM" id="SSF55174">
    <property type="entry name" value="Alpha-L RNA-binding motif"/>
    <property type="match status" value="1"/>
</dbReference>
<dbReference type="SUPFAM" id="SSF52374">
    <property type="entry name" value="Nucleotidylyl transferase"/>
    <property type="match status" value="1"/>
</dbReference>
<dbReference type="PROSITE" id="PS00178">
    <property type="entry name" value="AA_TRNA_LIGASE_I"/>
    <property type="match status" value="1"/>
</dbReference>
<dbReference type="PROSITE" id="PS50889">
    <property type="entry name" value="S4"/>
    <property type="match status" value="1"/>
</dbReference>
<reference key="1">
    <citation type="journal article" date="2001" name="Proc. Natl. Acad. Sci. U.S.A.">
        <title>Genome sequence of an industrial microorganism Streptomyces avermitilis: deducing the ability of producing secondary metabolites.</title>
        <authorList>
            <person name="Omura S."/>
            <person name="Ikeda H."/>
            <person name="Ishikawa J."/>
            <person name="Hanamoto A."/>
            <person name="Takahashi C."/>
            <person name="Shinose M."/>
            <person name="Takahashi Y."/>
            <person name="Horikawa H."/>
            <person name="Nakazawa H."/>
            <person name="Osonoe T."/>
            <person name="Kikuchi H."/>
            <person name="Shiba T."/>
            <person name="Sakaki Y."/>
            <person name="Hattori M."/>
        </authorList>
    </citation>
    <scope>NUCLEOTIDE SEQUENCE [LARGE SCALE GENOMIC DNA]</scope>
    <source>
        <strain>ATCC 31267 / DSM 46492 / JCM 5070 / NBRC 14893 / NCIMB 12804 / NRRL 8165 / MA-4680</strain>
    </source>
</reference>
<reference key="2">
    <citation type="journal article" date="2003" name="Nat. Biotechnol.">
        <title>Complete genome sequence and comparative analysis of the industrial microorganism Streptomyces avermitilis.</title>
        <authorList>
            <person name="Ikeda H."/>
            <person name="Ishikawa J."/>
            <person name="Hanamoto A."/>
            <person name="Shinose M."/>
            <person name="Kikuchi H."/>
            <person name="Shiba T."/>
            <person name="Sakaki Y."/>
            <person name="Hattori M."/>
            <person name="Omura S."/>
        </authorList>
    </citation>
    <scope>NUCLEOTIDE SEQUENCE [LARGE SCALE GENOMIC DNA]</scope>
    <source>
        <strain>ATCC 31267 / DSM 46492 / JCM 5070 / NBRC 14893 / NCIMB 12804 / NRRL 8165 / MA-4680</strain>
    </source>
</reference>
<comment type="function">
    <text evidence="1">Catalyzes the attachment of tyrosine to tRNA(Tyr) in a two-step reaction: tyrosine is first activated by ATP to form Tyr-AMP and then transferred to the acceptor end of tRNA(Tyr).</text>
</comment>
<comment type="catalytic activity">
    <reaction evidence="1">
        <text>tRNA(Tyr) + L-tyrosine + ATP = L-tyrosyl-tRNA(Tyr) + AMP + diphosphate + H(+)</text>
        <dbReference type="Rhea" id="RHEA:10220"/>
        <dbReference type="Rhea" id="RHEA-COMP:9706"/>
        <dbReference type="Rhea" id="RHEA-COMP:9707"/>
        <dbReference type="ChEBI" id="CHEBI:15378"/>
        <dbReference type="ChEBI" id="CHEBI:30616"/>
        <dbReference type="ChEBI" id="CHEBI:33019"/>
        <dbReference type="ChEBI" id="CHEBI:58315"/>
        <dbReference type="ChEBI" id="CHEBI:78442"/>
        <dbReference type="ChEBI" id="CHEBI:78536"/>
        <dbReference type="ChEBI" id="CHEBI:456215"/>
        <dbReference type="EC" id="6.1.1.1"/>
    </reaction>
</comment>
<comment type="subunit">
    <text evidence="1">Homodimer.</text>
</comment>
<comment type="subcellular location">
    <subcellularLocation>
        <location evidence="1">Cytoplasm</location>
    </subcellularLocation>
</comment>
<comment type="similarity">
    <text evidence="1">Belongs to the class-I aminoacyl-tRNA synthetase family. TyrS type 1 subfamily.</text>
</comment>
<name>SYY_STRAW</name>
<organism>
    <name type="scientific">Streptomyces avermitilis (strain ATCC 31267 / DSM 46492 / JCM 5070 / NBRC 14893 / NCIMB 12804 / NRRL 8165 / MA-4680)</name>
    <dbReference type="NCBI Taxonomy" id="227882"/>
    <lineage>
        <taxon>Bacteria</taxon>
        <taxon>Bacillati</taxon>
        <taxon>Actinomycetota</taxon>
        <taxon>Actinomycetes</taxon>
        <taxon>Kitasatosporales</taxon>
        <taxon>Streptomycetaceae</taxon>
        <taxon>Streptomyces</taxon>
    </lineage>
</organism>